<comment type="function">
    <text evidence="1">RNA-binding factor which binds specifically to the very 3'-UTR ends of both histone H1 and H3.3 mRNAs, encompassing the polyadenylation signal. Might play a central role in the negative regulation of histone variant synthesis in the developing brain (By similarity).</text>
</comment>
<comment type="subcellular location">
    <subcellularLocation>
        <location evidence="1">Nucleus</location>
    </subcellularLocation>
    <subcellularLocation>
        <location evidence="1">Cytoplasm</location>
    </subcellularLocation>
    <text evidence="1">PIPPin-RNA complexes are located to the nucleus.</text>
</comment>
<dbReference type="EMBL" id="AK028916">
    <property type="protein sequence ID" value="BAC26194.1"/>
    <property type="molecule type" value="mRNA"/>
</dbReference>
<dbReference type="EMBL" id="AK132493">
    <property type="protein sequence ID" value="BAE21201.1"/>
    <property type="molecule type" value="mRNA"/>
</dbReference>
<dbReference type="EMBL" id="AC102103">
    <property type="status" value="NOT_ANNOTATED_CDS"/>
    <property type="molecule type" value="Genomic_DNA"/>
</dbReference>
<dbReference type="EMBL" id="BC016109">
    <property type="protein sequence ID" value="AAH16109.1"/>
    <property type="molecule type" value="mRNA"/>
</dbReference>
<dbReference type="CCDS" id="CCDS27677.1"/>
<dbReference type="RefSeq" id="NP_663448.2">
    <property type="nucleotide sequence ID" value="NM_145473.3"/>
</dbReference>
<dbReference type="SMR" id="Q91YQ3"/>
<dbReference type="BioGRID" id="222938">
    <property type="interactions" value="3"/>
</dbReference>
<dbReference type="FunCoup" id="Q91YQ3">
    <property type="interactions" value="1439"/>
</dbReference>
<dbReference type="IntAct" id="Q91YQ3">
    <property type="interactions" value="2"/>
</dbReference>
<dbReference type="STRING" id="10090.ENSMUSP00000044441"/>
<dbReference type="iPTMnet" id="Q91YQ3"/>
<dbReference type="PhosphoSitePlus" id="Q91YQ3"/>
<dbReference type="PaxDb" id="10090-ENSMUSP00000044441"/>
<dbReference type="ProteomicsDB" id="277901"/>
<dbReference type="Antibodypedia" id="310">
    <property type="antibodies" value="142 antibodies from 23 providers"/>
</dbReference>
<dbReference type="DNASU" id="105859"/>
<dbReference type="Ensembl" id="ENSMUST00000038757.8">
    <property type="protein sequence ID" value="ENSMUSP00000044441.8"/>
    <property type="gene ID" value="ENSMUSG00000042109.9"/>
</dbReference>
<dbReference type="GeneID" id="105859"/>
<dbReference type="KEGG" id="mmu:105859"/>
<dbReference type="UCSC" id="uc007wxs.2">
    <property type="organism name" value="mouse"/>
</dbReference>
<dbReference type="AGR" id="MGI:2146027"/>
<dbReference type="CTD" id="27254"/>
<dbReference type="MGI" id="MGI:2146027">
    <property type="gene designation" value="Csdc2"/>
</dbReference>
<dbReference type="VEuPathDB" id="HostDB:ENSMUSG00000042109"/>
<dbReference type="eggNOG" id="KOG3070">
    <property type="taxonomic scope" value="Eukaryota"/>
</dbReference>
<dbReference type="GeneTree" id="ENSGT00390000000022"/>
<dbReference type="HOGENOM" id="CLU_139526_1_0_1"/>
<dbReference type="InParanoid" id="Q91YQ3"/>
<dbReference type="OMA" id="QFSRAQG"/>
<dbReference type="OrthoDB" id="448492at2759"/>
<dbReference type="PhylomeDB" id="Q91YQ3"/>
<dbReference type="TreeFam" id="TF324381"/>
<dbReference type="BioGRID-ORCS" id="105859">
    <property type="hits" value="4 hits in 76 CRISPR screens"/>
</dbReference>
<dbReference type="PRO" id="PR:Q91YQ3"/>
<dbReference type="Proteomes" id="UP000000589">
    <property type="component" value="Chromosome 15"/>
</dbReference>
<dbReference type="RNAct" id="Q91YQ3">
    <property type="molecule type" value="protein"/>
</dbReference>
<dbReference type="Bgee" id="ENSMUSG00000042109">
    <property type="expression patterns" value="Expressed in pontine nuclear group and 261 other cell types or tissues"/>
</dbReference>
<dbReference type="ExpressionAtlas" id="Q91YQ3">
    <property type="expression patterns" value="baseline and differential"/>
</dbReference>
<dbReference type="GO" id="GO:0005737">
    <property type="term" value="C:cytoplasm"/>
    <property type="evidence" value="ECO:0007669"/>
    <property type="project" value="UniProtKB-SubCell"/>
</dbReference>
<dbReference type="GO" id="GO:0005634">
    <property type="term" value="C:nucleus"/>
    <property type="evidence" value="ECO:0007669"/>
    <property type="project" value="UniProtKB-SubCell"/>
</dbReference>
<dbReference type="GO" id="GO:0003723">
    <property type="term" value="F:RNA binding"/>
    <property type="evidence" value="ECO:0007669"/>
    <property type="project" value="UniProtKB-KW"/>
</dbReference>
<dbReference type="GO" id="GO:0006397">
    <property type="term" value="P:mRNA processing"/>
    <property type="evidence" value="ECO:0007669"/>
    <property type="project" value="UniProtKB-KW"/>
</dbReference>
<dbReference type="CDD" id="cd04458">
    <property type="entry name" value="CSP_CDS"/>
    <property type="match status" value="1"/>
</dbReference>
<dbReference type="FunFam" id="2.40.50.140:FF:000086">
    <property type="entry name" value="Cold shock domain-containing protein C2"/>
    <property type="match status" value="1"/>
</dbReference>
<dbReference type="Gene3D" id="2.40.50.140">
    <property type="entry name" value="Nucleic acid-binding proteins"/>
    <property type="match status" value="1"/>
</dbReference>
<dbReference type="InterPro" id="IPR052069">
    <property type="entry name" value="Ca-reg_mRNA-binding_domain"/>
</dbReference>
<dbReference type="InterPro" id="IPR011129">
    <property type="entry name" value="CSD"/>
</dbReference>
<dbReference type="InterPro" id="IPR019844">
    <property type="entry name" value="CSD_CS"/>
</dbReference>
<dbReference type="InterPro" id="IPR002059">
    <property type="entry name" value="CSP_DNA-bd"/>
</dbReference>
<dbReference type="InterPro" id="IPR012340">
    <property type="entry name" value="NA-bd_OB-fold"/>
</dbReference>
<dbReference type="PANTHER" id="PTHR12962">
    <property type="entry name" value="CALCIUM-REGULATED HEAT STABLE PROTEIN CRHSP-24-RELATED"/>
    <property type="match status" value="1"/>
</dbReference>
<dbReference type="PANTHER" id="PTHR12962:SF4">
    <property type="entry name" value="COLD SHOCK DOMAIN-CONTAINING PROTEIN C2"/>
    <property type="match status" value="1"/>
</dbReference>
<dbReference type="Pfam" id="PF00313">
    <property type="entry name" value="CSD"/>
    <property type="match status" value="1"/>
</dbReference>
<dbReference type="SMART" id="SM00357">
    <property type="entry name" value="CSP"/>
    <property type="match status" value="1"/>
</dbReference>
<dbReference type="SUPFAM" id="SSF50249">
    <property type="entry name" value="Nucleic acid-binding proteins"/>
    <property type="match status" value="1"/>
</dbReference>
<dbReference type="PROSITE" id="PS00352">
    <property type="entry name" value="CSD_1"/>
    <property type="match status" value="1"/>
</dbReference>
<dbReference type="PROSITE" id="PS51857">
    <property type="entry name" value="CSD_2"/>
    <property type="match status" value="1"/>
</dbReference>
<reference key="1">
    <citation type="journal article" date="2005" name="Science">
        <title>The transcriptional landscape of the mammalian genome.</title>
        <authorList>
            <person name="Carninci P."/>
            <person name="Kasukawa T."/>
            <person name="Katayama S."/>
            <person name="Gough J."/>
            <person name="Frith M.C."/>
            <person name="Maeda N."/>
            <person name="Oyama R."/>
            <person name="Ravasi T."/>
            <person name="Lenhard B."/>
            <person name="Wells C."/>
            <person name="Kodzius R."/>
            <person name="Shimokawa K."/>
            <person name="Bajic V.B."/>
            <person name="Brenner S.E."/>
            <person name="Batalov S."/>
            <person name="Forrest A.R."/>
            <person name="Zavolan M."/>
            <person name="Davis M.J."/>
            <person name="Wilming L.G."/>
            <person name="Aidinis V."/>
            <person name="Allen J.E."/>
            <person name="Ambesi-Impiombato A."/>
            <person name="Apweiler R."/>
            <person name="Aturaliya R.N."/>
            <person name="Bailey T.L."/>
            <person name="Bansal M."/>
            <person name="Baxter L."/>
            <person name="Beisel K.W."/>
            <person name="Bersano T."/>
            <person name="Bono H."/>
            <person name="Chalk A.M."/>
            <person name="Chiu K.P."/>
            <person name="Choudhary V."/>
            <person name="Christoffels A."/>
            <person name="Clutterbuck D.R."/>
            <person name="Crowe M.L."/>
            <person name="Dalla E."/>
            <person name="Dalrymple B.P."/>
            <person name="de Bono B."/>
            <person name="Della Gatta G."/>
            <person name="di Bernardo D."/>
            <person name="Down T."/>
            <person name="Engstrom P."/>
            <person name="Fagiolini M."/>
            <person name="Faulkner G."/>
            <person name="Fletcher C.F."/>
            <person name="Fukushima T."/>
            <person name="Furuno M."/>
            <person name="Futaki S."/>
            <person name="Gariboldi M."/>
            <person name="Georgii-Hemming P."/>
            <person name="Gingeras T.R."/>
            <person name="Gojobori T."/>
            <person name="Green R.E."/>
            <person name="Gustincich S."/>
            <person name="Harbers M."/>
            <person name="Hayashi Y."/>
            <person name="Hensch T.K."/>
            <person name="Hirokawa N."/>
            <person name="Hill D."/>
            <person name="Huminiecki L."/>
            <person name="Iacono M."/>
            <person name="Ikeo K."/>
            <person name="Iwama A."/>
            <person name="Ishikawa T."/>
            <person name="Jakt M."/>
            <person name="Kanapin A."/>
            <person name="Katoh M."/>
            <person name="Kawasawa Y."/>
            <person name="Kelso J."/>
            <person name="Kitamura H."/>
            <person name="Kitano H."/>
            <person name="Kollias G."/>
            <person name="Krishnan S.P."/>
            <person name="Kruger A."/>
            <person name="Kummerfeld S.K."/>
            <person name="Kurochkin I.V."/>
            <person name="Lareau L.F."/>
            <person name="Lazarevic D."/>
            <person name="Lipovich L."/>
            <person name="Liu J."/>
            <person name="Liuni S."/>
            <person name="McWilliam S."/>
            <person name="Madan Babu M."/>
            <person name="Madera M."/>
            <person name="Marchionni L."/>
            <person name="Matsuda H."/>
            <person name="Matsuzawa S."/>
            <person name="Miki H."/>
            <person name="Mignone F."/>
            <person name="Miyake S."/>
            <person name="Morris K."/>
            <person name="Mottagui-Tabar S."/>
            <person name="Mulder N."/>
            <person name="Nakano N."/>
            <person name="Nakauchi H."/>
            <person name="Ng P."/>
            <person name="Nilsson R."/>
            <person name="Nishiguchi S."/>
            <person name="Nishikawa S."/>
            <person name="Nori F."/>
            <person name="Ohara O."/>
            <person name="Okazaki Y."/>
            <person name="Orlando V."/>
            <person name="Pang K.C."/>
            <person name="Pavan W.J."/>
            <person name="Pavesi G."/>
            <person name="Pesole G."/>
            <person name="Petrovsky N."/>
            <person name="Piazza S."/>
            <person name="Reed J."/>
            <person name="Reid J.F."/>
            <person name="Ring B.Z."/>
            <person name="Ringwald M."/>
            <person name="Rost B."/>
            <person name="Ruan Y."/>
            <person name="Salzberg S.L."/>
            <person name="Sandelin A."/>
            <person name="Schneider C."/>
            <person name="Schoenbach C."/>
            <person name="Sekiguchi K."/>
            <person name="Semple C.A."/>
            <person name="Seno S."/>
            <person name="Sessa L."/>
            <person name="Sheng Y."/>
            <person name="Shibata Y."/>
            <person name="Shimada H."/>
            <person name="Shimada K."/>
            <person name="Silva D."/>
            <person name="Sinclair B."/>
            <person name="Sperling S."/>
            <person name="Stupka E."/>
            <person name="Sugiura K."/>
            <person name="Sultana R."/>
            <person name="Takenaka Y."/>
            <person name="Taki K."/>
            <person name="Tammoja K."/>
            <person name="Tan S.L."/>
            <person name="Tang S."/>
            <person name="Taylor M.S."/>
            <person name="Tegner J."/>
            <person name="Teichmann S.A."/>
            <person name="Ueda H.R."/>
            <person name="van Nimwegen E."/>
            <person name="Verardo R."/>
            <person name="Wei C.L."/>
            <person name="Yagi K."/>
            <person name="Yamanishi H."/>
            <person name="Zabarovsky E."/>
            <person name="Zhu S."/>
            <person name="Zimmer A."/>
            <person name="Hide W."/>
            <person name="Bult C."/>
            <person name="Grimmond S.M."/>
            <person name="Teasdale R.D."/>
            <person name="Liu E.T."/>
            <person name="Brusic V."/>
            <person name="Quackenbush J."/>
            <person name="Wahlestedt C."/>
            <person name="Mattick J.S."/>
            <person name="Hume D.A."/>
            <person name="Kai C."/>
            <person name="Sasaki D."/>
            <person name="Tomaru Y."/>
            <person name="Fukuda S."/>
            <person name="Kanamori-Katayama M."/>
            <person name="Suzuki M."/>
            <person name="Aoki J."/>
            <person name="Arakawa T."/>
            <person name="Iida J."/>
            <person name="Imamura K."/>
            <person name="Itoh M."/>
            <person name="Kato T."/>
            <person name="Kawaji H."/>
            <person name="Kawagashira N."/>
            <person name="Kawashima T."/>
            <person name="Kojima M."/>
            <person name="Kondo S."/>
            <person name="Konno H."/>
            <person name="Nakano K."/>
            <person name="Ninomiya N."/>
            <person name="Nishio T."/>
            <person name="Okada M."/>
            <person name="Plessy C."/>
            <person name="Shibata K."/>
            <person name="Shiraki T."/>
            <person name="Suzuki S."/>
            <person name="Tagami M."/>
            <person name="Waki K."/>
            <person name="Watahiki A."/>
            <person name="Okamura-Oho Y."/>
            <person name="Suzuki H."/>
            <person name="Kawai J."/>
            <person name="Hayashizaki Y."/>
        </authorList>
    </citation>
    <scope>NUCLEOTIDE SEQUENCE [LARGE SCALE MRNA]</scope>
    <source>
        <strain>C57BL/6J</strain>
        <tissue>Skin</tissue>
    </source>
</reference>
<reference key="2">
    <citation type="journal article" date="2009" name="PLoS Biol.">
        <title>Lineage-specific biology revealed by a finished genome assembly of the mouse.</title>
        <authorList>
            <person name="Church D.M."/>
            <person name="Goodstadt L."/>
            <person name="Hillier L.W."/>
            <person name="Zody M.C."/>
            <person name="Goldstein S."/>
            <person name="She X."/>
            <person name="Bult C.J."/>
            <person name="Agarwala R."/>
            <person name="Cherry J.L."/>
            <person name="DiCuccio M."/>
            <person name="Hlavina W."/>
            <person name="Kapustin Y."/>
            <person name="Meric P."/>
            <person name="Maglott D."/>
            <person name="Birtle Z."/>
            <person name="Marques A.C."/>
            <person name="Graves T."/>
            <person name="Zhou S."/>
            <person name="Teague B."/>
            <person name="Potamousis K."/>
            <person name="Churas C."/>
            <person name="Place M."/>
            <person name="Herschleb J."/>
            <person name="Runnheim R."/>
            <person name="Forrest D."/>
            <person name="Amos-Landgraf J."/>
            <person name="Schwartz D.C."/>
            <person name="Cheng Z."/>
            <person name="Lindblad-Toh K."/>
            <person name="Eichler E.E."/>
            <person name="Ponting C.P."/>
        </authorList>
    </citation>
    <scope>NUCLEOTIDE SEQUENCE [LARGE SCALE GENOMIC DNA]</scope>
    <source>
        <strain>C57BL/6J</strain>
    </source>
</reference>
<reference key="3">
    <citation type="journal article" date="2004" name="Genome Res.">
        <title>The status, quality, and expansion of the NIH full-length cDNA project: the Mammalian Gene Collection (MGC).</title>
        <authorList>
            <consortium name="The MGC Project Team"/>
        </authorList>
    </citation>
    <scope>NUCLEOTIDE SEQUENCE [LARGE SCALE MRNA]</scope>
    <source>
        <tissue>Mammary tumor</tissue>
    </source>
</reference>
<reference key="4">
    <citation type="journal article" date="2010" name="Cell">
        <title>A tissue-specific atlas of mouse protein phosphorylation and expression.</title>
        <authorList>
            <person name="Huttlin E.L."/>
            <person name="Jedrychowski M.P."/>
            <person name="Elias J.E."/>
            <person name="Goswami T."/>
            <person name="Rad R."/>
            <person name="Beausoleil S.A."/>
            <person name="Villen J."/>
            <person name="Haas W."/>
            <person name="Sowa M.E."/>
            <person name="Gygi S.P."/>
        </authorList>
    </citation>
    <scope>IDENTIFICATION BY MASS SPECTROMETRY [LARGE SCALE ANALYSIS]</scope>
    <source>
        <tissue>Brain</tissue>
    </source>
</reference>
<feature type="chain" id="PRO_0000100352" description="Cold shock domain-containing protein C2">
    <location>
        <begin position="1"/>
        <end position="154"/>
    </location>
</feature>
<feature type="domain" description="CSD">
    <location>
        <begin position="69"/>
        <end position="136"/>
    </location>
</feature>
<feature type="region of interest" description="Disordered" evidence="3">
    <location>
        <begin position="38"/>
        <end position="62"/>
    </location>
</feature>
<feature type="modified residue" description="Phosphoserine" evidence="2">
    <location>
        <position position="19"/>
    </location>
</feature>
<feature type="sequence conflict" description="In Ref. 3; AAH16109." evidence="4" ref="3">
    <original>L</original>
    <variation>S</variation>
    <location>
        <position position="7"/>
    </location>
</feature>
<proteinExistence type="evidence at protein level"/>
<name>CSDC2_MOUSE</name>
<accession>Q91YQ3</accession>
<accession>Q3V1F0</accession>
<gene>
    <name type="primary">Csdc2</name>
    <name type="synonym">Pippin</name>
</gene>
<organism>
    <name type="scientific">Mus musculus</name>
    <name type="common">Mouse</name>
    <dbReference type="NCBI Taxonomy" id="10090"/>
    <lineage>
        <taxon>Eukaryota</taxon>
        <taxon>Metazoa</taxon>
        <taxon>Chordata</taxon>
        <taxon>Craniata</taxon>
        <taxon>Vertebrata</taxon>
        <taxon>Euteleostomi</taxon>
        <taxon>Mammalia</taxon>
        <taxon>Eutheria</taxon>
        <taxon>Euarchontoglires</taxon>
        <taxon>Glires</taxon>
        <taxon>Rodentia</taxon>
        <taxon>Myomorpha</taxon>
        <taxon>Muroidea</taxon>
        <taxon>Muridae</taxon>
        <taxon>Murinae</taxon>
        <taxon>Mus</taxon>
        <taxon>Mus</taxon>
    </lineage>
</organism>
<evidence type="ECO:0000250" key="1"/>
<evidence type="ECO:0000250" key="2">
    <source>
        <dbReference type="UniProtKB" id="Q63430"/>
    </source>
</evidence>
<evidence type="ECO:0000256" key="3">
    <source>
        <dbReference type="SAM" id="MobiDB-lite"/>
    </source>
</evidence>
<evidence type="ECO:0000305" key="4"/>
<sequence>MTSESTLPPVVPPLHSPKSPVWPTFPFHREGSRIWERGGGIAPRDLPSPLPTKRTRTYSATARASAGPVFKGVCKQFSRSQGHGFITPENGSEDIFVHVSDIEGEYVPVEGDEVTYKICPIPPKNQKFQAVEVVLTQLAPHTPHETWSGQVVGS</sequence>
<protein>
    <recommendedName>
        <fullName>Cold shock domain-containing protein C2</fullName>
    </recommendedName>
    <alternativeName>
        <fullName>RNA-binding protein PIPPin</fullName>
    </alternativeName>
</protein>
<keyword id="KW-0963">Cytoplasm</keyword>
<keyword id="KW-0507">mRNA processing</keyword>
<keyword id="KW-0539">Nucleus</keyword>
<keyword id="KW-0597">Phosphoprotein</keyword>
<keyword id="KW-1185">Reference proteome</keyword>
<keyword id="KW-0694">RNA-binding</keyword>